<gene>
    <name evidence="1" type="primary">rpoA</name>
    <name type="ordered locus">BURPS1710b_3750</name>
</gene>
<reference key="1">
    <citation type="journal article" date="2010" name="Genome Biol. Evol.">
        <title>Continuing evolution of Burkholderia mallei through genome reduction and large-scale rearrangements.</title>
        <authorList>
            <person name="Losada L."/>
            <person name="Ronning C.M."/>
            <person name="DeShazer D."/>
            <person name="Woods D."/>
            <person name="Fedorova N."/>
            <person name="Kim H.S."/>
            <person name="Shabalina S.A."/>
            <person name="Pearson T.R."/>
            <person name="Brinkac L."/>
            <person name="Tan P."/>
            <person name="Nandi T."/>
            <person name="Crabtree J."/>
            <person name="Badger J."/>
            <person name="Beckstrom-Sternberg S."/>
            <person name="Saqib M."/>
            <person name="Schutzer S.E."/>
            <person name="Keim P."/>
            <person name="Nierman W.C."/>
        </authorList>
    </citation>
    <scope>NUCLEOTIDE SEQUENCE [LARGE SCALE GENOMIC DNA]</scope>
    <source>
        <strain>1710b</strain>
    </source>
</reference>
<name>RPOA_BURP1</name>
<accession>Q3JMT9</accession>
<feature type="chain" id="PRO_0000225261" description="DNA-directed RNA polymerase subunit alpha">
    <location>
        <begin position="1"/>
        <end position="325"/>
    </location>
</feature>
<feature type="region of interest" description="Alpha N-terminal domain (alpha-NTD)" evidence="1">
    <location>
        <begin position="1"/>
        <end position="231"/>
    </location>
</feature>
<feature type="region of interest" description="Alpha C-terminal domain (alpha-CTD)" evidence="1">
    <location>
        <begin position="246"/>
        <end position="325"/>
    </location>
</feature>
<protein>
    <recommendedName>
        <fullName evidence="1">DNA-directed RNA polymerase subunit alpha</fullName>
        <shortName evidence="1">RNAP subunit alpha</shortName>
        <ecNumber evidence="1">2.7.7.6</ecNumber>
    </recommendedName>
    <alternativeName>
        <fullName evidence="1">RNA polymerase subunit alpha</fullName>
    </alternativeName>
    <alternativeName>
        <fullName evidence="1">Transcriptase subunit alpha</fullName>
    </alternativeName>
</protein>
<proteinExistence type="inferred from homology"/>
<keyword id="KW-0240">DNA-directed RNA polymerase</keyword>
<keyword id="KW-0548">Nucleotidyltransferase</keyword>
<keyword id="KW-0804">Transcription</keyword>
<keyword id="KW-0808">Transferase</keyword>
<evidence type="ECO:0000255" key="1">
    <source>
        <dbReference type="HAMAP-Rule" id="MF_00059"/>
    </source>
</evidence>
<dbReference type="EC" id="2.7.7.6" evidence="1"/>
<dbReference type="EMBL" id="CP000124">
    <property type="protein sequence ID" value="ABA47847.1"/>
    <property type="molecule type" value="Genomic_DNA"/>
</dbReference>
<dbReference type="RefSeq" id="WP_004197925.1">
    <property type="nucleotide sequence ID" value="NC_007434.1"/>
</dbReference>
<dbReference type="SMR" id="Q3JMT9"/>
<dbReference type="EnsemblBacteria" id="ABA47847">
    <property type="protein sequence ID" value="ABA47847"/>
    <property type="gene ID" value="BURPS1710b_3750"/>
</dbReference>
<dbReference type="GeneID" id="93061806"/>
<dbReference type="KEGG" id="bpm:BURPS1710b_3750"/>
<dbReference type="HOGENOM" id="CLU_053084_0_0_4"/>
<dbReference type="Proteomes" id="UP000002700">
    <property type="component" value="Chromosome I"/>
</dbReference>
<dbReference type="GO" id="GO:0005737">
    <property type="term" value="C:cytoplasm"/>
    <property type="evidence" value="ECO:0007669"/>
    <property type="project" value="UniProtKB-ARBA"/>
</dbReference>
<dbReference type="GO" id="GO:0000428">
    <property type="term" value="C:DNA-directed RNA polymerase complex"/>
    <property type="evidence" value="ECO:0007669"/>
    <property type="project" value="UniProtKB-KW"/>
</dbReference>
<dbReference type="GO" id="GO:0003677">
    <property type="term" value="F:DNA binding"/>
    <property type="evidence" value="ECO:0007669"/>
    <property type="project" value="UniProtKB-UniRule"/>
</dbReference>
<dbReference type="GO" id="GO:0003899">
    <property type="term" value="F:DNA-directed RNA polymerase activity"/>
    <property type="evidence" value="ECO:0007669"/>
    <property type="project" value="UniProtKB-UniRule"/>
</dbReference>
<dbReference type="GO" id="GO:0046983">
    <property type="term" value="F:protein dimerization activity"/>
    <property type="evidence" value="ECO:0007669"/>
    <property type="project" value="InterPro"/>
</dbReference>
<dbReference type="GO" id="GO:0006351">
    <property type="term" value="P:DNA-templated transcription"/>
    <property type="evidence" value="ECO:0007669"/>
    <property type="project" value="UniProtKB-UniRule"/>
</dbReference>
<dbReference type="CDD" id="cd06928">
    <property type="entry name" value="RNAP_alpha_NTD"/>
    <property type="match status" value="1"/>
</dbReference>
<dbReference type="FunFam" id="1.10.150.20:FF:000001">
    <property type="entry name" value="DNA-directed RNA polymerase subunit alpha"/>
    <property type="match status" value="1"/>
</dbReference>
<dbReference type="FunFam" id="2.170.120.12:FF:000001">
    <property type="entry name" value="DNA-directed RNA polymerase subunit alpha"/>
    <property type="match status" value="1"/>
</dbReference>
<dbReference type="Gene3D" id="1.10.150.20">
    <property type="entry name" value="5' to 3' exonuclease, C-terminal subdomain"/>
    <property type="match status" value="1"/>
</dbReference>
<dbReference type="Gene3D" id="2.170.120.12">
    <property type="entry name" value="DNA-directed RNA polymerase, insert domain"/>
    <property type="match status" value="1"/>
</dbReference>
<dbReference type="Gene3D" id="3.30.1360.10">
    <property type="entry name" value="RNA polymerase, RBP11-like subunit"/>
    <property type="match status" value="1"/>
</dbReference>
<dbReference type="HAMAP" id="MF_00059">
    <property type="entry name" value="RNApol_bact_RpoA"/>
    <property type="match status" value="1"/>
</dbReference>
<dbReference type="InterPro" id="IPR011262">
    <property type="entry name" value="DNA-dir_RNA_pol_insert"/>
</dbReference>
<dbReference type="InterPro" id="IPR011263">
    <property type="entry name" value="DNA-dir_RNA_pol_RpoA/D/Rpb3"/>
</dbReference>
<dbReference type="InterPro" id="IPR011773">
    <property type="entry name" value="DNA-dir_RpoA"/>
</dbReference>
<dbReference type="InterPro" id="IPR036603">
    <property type="entry name" value="RBP11-like"/>
</dbReference>
<dbReference type="InterPro" id="IPR011260">
    <property type="entry name" value="RNAP_asu_C"/>
</dbReference>
<dbReference type="InterPro" id="IPR036643">
    <property type="entry name" value="RNApol_insert_sf"/>
</dbReference>
<dbReference type="NCBIfam" id="NF003513">
    <property type="entry name" value="PRK05182.1-2"/>
    <property type="match status" value="1"/>
</dbReference>
<dbReference type="NCBIfam" id="NF003519">
    <property type="entry name" value="PRK05182.2-5"/>
    <property type="match status" value="1"/>
</dbReference>
<dbReference type="NCBIfam" id="TIGR02027">
    <property type="entry name" value="rpoA"/>
    <property type="match status" value="1"/>
</dbReference>
<dbReference type="Pfam" id="PF01000">
    <property type="entry name" value="RNA_pol_A_bac"/>
    <property type="match status" value="1"/>
</dbReference>
<dbReference type="Pfam" id="PF03118">
    <property type="entry name" value="RNA_pol_A_CTD"/>
    <property type="match status" value="1"/>
</dbReference>
<dbReference type="Pfam" id="PF01193">
    <property type="entry name" value="RNA_pol_L"/>
    <property type="match status" value="1"/>
</dbReference>
<dbReference type="SMART" id="SM00662">
    <property type="entry name" value="RPOLD"/>
    <property type="match status" value="1"/>
</dbReference>
<dbReference type="SUPFAM" id="SSF47789">
    <property type="entry name" value="C-terminal domain of RNA polymerase alpha subunit"/>
    <property type="match status" value="1"/>
</dbReference>
<dbReference type="SUPFAM" id="SSF56553">
    <property type="entry name" value="Insert subdomain of RNA polymerase alpha subunit"/>
    <property type="match status" value="1"/>
</dbReference>
<dbReference type="SUPFAM" id="SSF55257">
    <property type="entry name" value="RBP11-like subunits of RNA polymerase"/>
    <property type="match status" value="1"/>
</dbReference>
<comment type="function">
    <text evidence="1">DNA-dependent RNA polymerase catalyzes the transcription of DNA into RNA using the four ribonucleoside triphosphates as substrates.</text>
</comment>
<comment type="catalytic activity">
    <reaction evidence="1">
        <text>RNA(n) + a ribonucleoside 5'-triphosphate = RNA(n+1) + diphosphate</text>
        <dbReference type="Rhea" id="RHEA:21248"/>
        <dbReference type="Rhea" id="RHEA-COMP:14527"/>
        <dbReference type="Rhea" id="RHEA-COMP:17342"/>
        <dbReference type="ChEBI" id="CHEBI:33019"/>
        <dbReference type="ChEBI" id="CHEBI:61557"/>
        <dbReference type="ChEBI" id="CHEBI:140395"/>
        <dbReference type="EC" id="2.7.7.6"/>
    </reaction>
</comment>
<comment type="subunit">
    <text evidence="1">Homodimer. The RNAP catalytic core consists of 2 alpha, 1 beta, 1 beta' and 1 omega subunit. When a sigma factor is associated with the core the holoenzyme is formed, which can initiate transcription.</text>
</comment>
<comment type="domain">
    <text evidence="1">The N-terminal domain is essential for RNAP assembly and basal transcription, whereas the C-terminal domain is involved in interaction with transcriptional regulators and with upstream promoter elements.</text>
</comment>
<comment type="similarity">
    <text evidence="1">Belongs to the RNA polymerase alpha chain family.</text>
</comment>
<organism>
    <name type="scientific">Burkholderia pseudomallei (strain 1710b)</name>
    <dbReference type="NCBI Taxonomy" id="320372"/>
    <lineage>
        <taxon>Bacteria</taxon>
        <taxon>Pseudomonadati</taxon>
        <taxon>Pseudomonadota</taxon>
        <taxon>Betaproteobacteria</taxon>
        <taxon>Burkholderiales</taxon>
        <taxon>Burkholderiaceae</taxon>
        <taxon>Burkholderia</taxon>
        <taxon>pseudomallei group</taxon>
    </lineage>
</organism>
<sequence length="325" mass="35685">MQTSLLKPKIIAVESLGENHAKVVMEPFERGYGHTLGNALRRVLLSSMVGYAPTEVTIAGVVHEYSTLDGVQEDVVNLLLNLKGVVFKLHNRDEVTVTLRKEGEGVVTAGDIELAHDCEVINPNHVIAHLSKGGKLDVQIKVEKGRGYVPGNVRRYGDETAKIIGRIVLDASFSPVRRVSYTVESARVEQRTDLDKLVMNIETSGVITPEEAIRQSARILVDQLSVFAALEGTETAAEAPSRAPQIDPILLRPVDDLELTVRSANCLKAENIYYIGDLIQRTENELLKTPNLGRKSLNEIKEVLASRGLTLGMKLENWPPAGLDK</sequence>